<proteinExistence type="inferred from homology"/>
<keyword id="KW-0170">Cobalt</keyword>
<keyword id="KW-0963">Cytoplasm</keyword>
<keyword id="KW-0460">Magnesium</keyword>
<keyword id="KW-0479">Metal-binding</keyword>
<keyword id="KW-0520">NAD</keyword>
<keyword id="KW-0521">NADP</keyword>
<keyword id="KW-0560">Oxidoreductase</keyword>
<keyword id="KW-0664">Pyridoxine biosynthesis</keyword>
<keyword id="KW-1185">Reference proteome</keyword>
<keyword id="KW-0862">Zinc</keyword>
<gene>
    <name evidence="1" type="primary">pdxA</name>
    <name type="ordered locus">SSON_0060</name>
</gene>
<protein>
    <recommendedName>
        <fullName evidence="1">4-hydroxythreonine-4-phosphate dehydrogenase</fullName>
        <ecNumber evidence="1">1.1.1.262</ecNumber>
    </recommendedName>
    <alternativeName>
        <fullName evidence="1">4-(phosphohydroxy)-L-threonine dehydrogenase</fullName>
    </alternativeName>
</protein>
<dbReference type="EC" id="1.1.1.262" evidence="1"/>
<dbReference type="EMBL" id="CP000038">
    <property type="protein sequence ID" value="AAZ86855.1"/>
    <property type="molecule type" value="Genomic_DNA"/>
</dbReference>
<dbReference type="RefSeq" id="WP_000241245.1">
    <property type="nucleotide sequence ID" value="NC_007384.1"/>
</dbReference>
<dbReference type="SMR" id="Q3Z5V7"/>
<dbReference type="GeneID" id="93777383"/>
<dbReference type="KEGG" id="ssn:SSON_0060"/>
<dbReference type="HOGENOM" id="CLU_040168_1_0_6"/>
<dbReference type="UniPathway" id="UPA00244">
    <property type="reaction ID" value="UER00312"/>
</dbReference>
<dbReference type="Proteomes" id="UP000002529">
    <property type="component" value="Chromosome"/>
</dbReference>
<dbReference type="GO" id="GO:0005737">
    <property type="term" value="C:cytoplasm"/>
    <property type="evidence" value="ECO:0007669"/>
    <property type="project" value="UniProtKB-SubCell"/>
</dbReference>
<dbReference type="GO" id="GO:0050570">
    <property type="term" value="F:4-hydroxythreonine-4-phosphate dehydrogenase activity"/>
    <property type="evidence" value="ECO:0007669"/>
    <property type="project" value="UniProtKB-UniRule"/>
</dbReference>
<dbReference type="GO" id="GO:0050897">
    <property type="term" value="F:cobalt ion binding"/>
    <property type="evidence" value="ECO:0007669"/>
    <property type="project" value="UniProtKB-UniRule"/>
</dbReference>
<dbReference type="GO" id="GO:0000287">
    <property type="term" value="F:magnesium ion binding"/>
    <property type="evidence" value="ECO:0007669"/>
    <property type="project" value="UniProtKB-UniRule"/>
</dbReference>
<dbReference type="GO" id="GO:0051287">
    <property type="term" value="F:NAD binding"/>
    <property type="evidence" value="ECO:0007669"/>
    <property type="project" value="InterPro"/>
</dbReference>
<dbReference type="GO" id="GO:0008270">
    <property type="term" value="F:zinc ion binding"/>
    <property type="evidence" value="ECO:0007669"/>
    <property type="project" value="UniProtKB-UniRule"/>
</dbReference>
<dbReference type="GO" id="GO:0042823">
    <property type="term" value="P:pyridoxal phosphate biosynthetic process"/>
    <property type="evidence" value="ECO:0007669"/>
    <property type="project" value="UniProtKB-UniRule"/>
</dbReference>
<dbReference type="GO" id="GO:0008615">
    <property type="term" value="P:pyridoxine biosynthetic process"/>
    <property type="evidence" value="ECO:0007669"/>
    <property type="project" value="UniProtKB-UniRule"/>
</dbReference>
<dbReference type="FunFam" id="3.40.718.10:FF:000010">
    <property type="entry name" value="4-hydroxythreonine-4-phosphate dehydrogenase"/>
    <property type="match status" value="1"/>
</dbReference>
<dbReference type="Gene3D" id="3.40.718.10">
    <property type="entry name" value="Isopropylmalate Dehydrogenase"/>
    <property type="match status" value="1"/>
</dbReference>
<dbReference type="HAMAP" id="MF_00536">
    <property type="entry name" value="PdxA"/>
    <property type="match status" value="1"/>
</dbReference>
<dbReference type="InterPro" id="IPR037510">
    <property type="entry name" value="PdxA"/>
</dbReference>
<dbReference type="InterPro" id="IPR005255">
    <property type="entry name" value="PdxA_fam"/>
</dbReference>
<dbReference type="NCBIfam" id="TIGR00557">
    <property type="entry name" value="pdxA"/>
    <property type="match status" value="1"/>
</dbReference>
<dbReference type="PANTHER" id="PTHR30004">
    <property type="entry name" value="4-HYDROXYTHREONINE-4-PHOSPHATE DEHYDROGENASE"/>
    <property type="match status" value="1"/>
</dbReference>
<dbReference type="PANTHER" id="PTHR30004:SF5">
    <property type="entry name" value="4-HYDROXYTHREONINE-4-PHOSPHATE DEHYDROGENASE"/>
    <property type="match status" value="1"/>
</dbReference>
<dbReference type="Pfam" id="PF04166">
    <property type="entry name" value="PdxA"/>
    <property type="match status" value="1"/>
</dbReference>
<dbReference type="SUPFAM" id="SSF53659">
    <property type="entry name" value="Isocitrate/Isopropylmalate dehydrogenase-like"/>
    <property type="match status" value="1"/>
</dbReference>
<comment type="function">
    <text evidence="1">Catalyzes the NAD(P)-dependent oxidation of 4-(phosphooxy)-L-threonine (HTP) into 2-amino-3-oxo-4-(phosphooxy)butyric acid which spontaneously decarboxylates to form 3-amino-2-oxopropyl phosphate (AHAP).</text>
</comment>
<comment type="catalytic activity">
    <reaction evidence="1">
        <text>4-(phosphooxy)-L-threonine + NAD(+) = 3-amino-2-oxopropyl phosphate + CO2 + NADH</text>
        <dbReference type="Rhea" id="RHEA:32275"/>
        <dbReference type="ChEBI" id="CHEBI:16526"/>
        <dbReference type="ChEBI" id="CHEBI:57279"/>
        <dbReference type="ChEBI" id="CHEBI:57540"/>
        <dbReference type="ChEBI" id="CHEBI:57945"/>
        <dbReference type="ChEBI" id="CHEBI:58452"/>
        <dbReference type="EC" id="1.1.1.262"/>
    </reaction>
</comment>
<comment type="cofactor">
    <cofactor evidence="1">
        <name>Zn(2+)</name>
        <dbReference type="ChEBI" id="CHEBI:29105"/>
    </cofactor>
    <cofactor evidence="1">
        <name>Mg(2+)</name>
        <dbReference type="ChEBI" id="CHEBI:18420"/>
    </cofactor>
    <cofactor evidence="1">
        <name>Co(2+)</name>
        <dbReference type="ChEBI" id="CHEBI:48828"/>
    </cofactor>
    <text evidence="1">Binds 1 divalent metal cation per subunit. Can use ions such as Zn(2+), Mg(2+) or Co(2+).</text>
</comment>
<comment type="pathway">
    <text evidence="1">Cofactor biosynthesis; pyridoxine 5'-phosphate biosynthesis; pyridoxine 5'-phosphate from D-erythrose 4-phosphate: step 4/5.</text>
</comment>
<comment type="subunit">
    <text evidence="1">Homodimer.</text>
</comment>
<comment type="subcellular location">
    <subcellularLocation>
        <location evidence="1">Cytoplasm</location>
    </subcellularLocation>
</comment>
<comment type="miscellaneous">
    <text evidence="1">The active site is located at the dimer interface.</text>
</comment>
<comment type="similarity">
    <text evidence="1">Belongs to the PdxA family.</text>
</comment>
<accession>Q3Z5V7</accession>
<feature type="chain" id="PRO_1000051518" description="4-hydroxythreonine-4-phosphate dehydrogenase">
    <location>
        <begin position="1"/>
        <end position="329"/>
    </location>
</feature>
<feature type="binding site" evidence="1">
    <location>
        <position position="136"/>
    </location>
    <ligand>
        <name>substrate</name>
    </ligand>
</feature>
<feature type="binding site" evidence="1">
    <location>
        <position position="137"/>
    </location>
    <ligand>
        <name>substrate</name>
    </ligand>
</feature>
<feature type="binding site" evidence="1">
    <location>
        <position position="166"/>
    </location>
    <ligand>
        <name>a divalent metal cation</name>
        <dbReference type="ChEBI" id="CHEBI:60240"/>
        <note>ligand shared between dimeric partners</note>
    </ligand>
</feature>
<feature type="binding site" evidence="1">
    <location>
        <position position="211"/>
    </location>
    <ligand>
        <name>a divalent metal cation</name>
        <dbReference type="ChEBI" id="CHEBI:60240"/>
        <note>ligand shared between dimeric partners</note>
    </ligand>
</feature>
<feature type="binding site" evidence="1">
    <location>
        <position position="266"/>
    </location>
    <ligand>
        <name>a divalent metal cation</name>
        <dbReference type="ChEBI" id="CHEBI:60240"/>
        <note>ligand shared between dimeric partners</note>
    </ligand>
</feature>
<feature type="binding site" evidence="1">
    <location>
        <position position="274"/>
    </location>
    <ligand>
        <name>substrate</name>
    </ligand>
</feature>
<feature type="binding site" evidence="1">
    <location>
        <position position="283"/>
    </location>
    <ligand>
        <name>substrate</name>
    </ligand>
</feature>
<feature type="binding site" evidence="1">
    <location>
        <position position="292"/>
    </location>
    <ligand>
        <name>substrate</name>
    </ligand>
</feature>
<evidence type="ECO:0000255" key="1">
    <source>
        <dbReference type="HAMAP-Rule" id="MF_00536"/>
    </source>
</evidence>
<sequence>MVKTQRVVITPGEPAGIGPDLVVQLAQREWPVELVVCADATLLTDRAAMLGLPLTLRPYSPNSPAQPQTAGTLTLLPVALRESVTAGQLAIENGHYVVETLARACDGCLNGEFAALITGPVHKGVINDAGIPFTGHTEFFEERSQAKKVVMMLATEELRVALATTHLPLRDIADAITPALLHEVIAILHHDLRTKFGIAEPRILVCGLNPHAGEGGHMGTEEIDTIIPVLNELRAQGMKLNGPLPADTLFQPKYLDNADAVLAMYHDQGLPVLKYQGFGRGVNITLGLPFIRTSVDHGTALELAGRGEADVGSFITALNLAIKMIVNTQ</sequence>
<reference key="1">
    <citation type="journal article" date="2005" name="Nucleic Acids Res.">
        <title>Genome dynamics and diversity of Shigella species, the etiologic agents of bacillary dysentery.</title>
        <authorList>
            <person name="Yang F."/>
            <person name="Yang J."/>
            <person name="Zhang X."/>
            <person name="Chen L."/>
            <person name="Jiang Y."/>
            <person name="Yan Y."/>
            <person name="Tang X."/>
            <person name="Wang J."/>
            <person name="Xiong Z."/>
            <person name="Dong J."/>
            <person name="Xue Y."/>
            <person name="Zhu Y."/>
            <person name="Xu X."/>
            <person name="Sun L."/>
            <person name="Chen S."/>
            <person name="Nie H."/>
            <person name="Peng J."/>
            <person name="Xu J."/>
            <person name="Wang Y."/>
            <person name="Yuan Z."/>
            <person name="Wen Y."/>
            <person name="Yao Z."/>
            <person name="Shen Y."/>
            <person name="Qiang B."/>
            <person name="Hou Y."/>
            <person name="Yu J."/>
            <person name="Jin Q."/>
        </authorList>
    </citation>
    <scope>NUCLEOTIDE SEQUENCE [LARGE SCALE GENOMIC DNA]</scope>
    <source>
        <strain>Ss046</strain>
    </source>
</reference>
<organism>
    <name type="scientific">Shigella sonnei (strain Ss046)</name>
    <dbReference type="NCBI Taxonomy" id="300269"/>
    <lineage>
        <taxon>Bacteria</taxon>
        <taxon>Pseudomonadati</taxon>
        <taxon>Pseudomonadota</taxon>
        <taxon>Gammaproteobacteria</taxon>
        <taxon>Enterobacterales</taxon>
        <taxon>Enterobacteriaceae</taxon>
        <taxon>Shigella</taxon>
    </lineage>
</organism>
<name>PDXA_SHISS</name>